<proteinExistence type="evidence at protein level"/>
<keyword id="KW-0002">3D-structure</keyword>
<keyword id="KW-0176">Collagen</keyword>
<keyword id="KW-0219">Diabetes mellitus</keyword>
<keyword id="KW-0903">Direct protein sequencing</keyword>
<keyword id="KW-0225">Disease variant</keyword>
<keyword id="KW-1015">Disulfide bond</keyword>
<keyword id="KW-0325">Glycoprotein</keyword>
<keyword id="KW-0372">Hormone</keyword>
<keyword id="KW-0379">Hydroxylation</keyword>
<keyword id="KW-0550">Obesity</keyword>
<keyword id="KW-0582">Pharmaceutical</keyword>
<keyword id="KW-1267">Proteomics identification</keyword>
<keyword id="KW-1185">Reference proteome</keyword>
<keyword id="KW-0677">Repeat</keyword>
<keyword id="KW-0964">Secreted</keyword>
<keyword id="KW-0732">Signal</keyword>
<accession>Q15848</accession>
<accession>Q58EX9</accession>
<gene>
    <name type="primary">ADIPOQ</name>
    <name type="synonym">ACDC</name>
    <name type="synonym">ACRP30</name>
    <name type="synonym">APM1</name>
    <name evidence="16 19" type="synonym">GBP28</name>
</gene>
<dbReference type="EMBL" id="D45371">
    <property type="protein sequence ID" value="BAA08227.1"/>
    <property type="molecule type" value="mRNA"/>
</dbReference>
<dbReference type="EMBL" id="AB012165">
    <property type="protein sequence ID" value="BAA86716.1"/>
    <property type="molecule type" value="Genomic_DNA"/>
</dbReference>
<dbReference type="EMBL" id="AJ131460">
    <property type="protein sequence ID" value="CAB52413.1"/>
    <property type="molecule type" value="Genomic_DNA"/>
</dbReference>
<dbReference type="EMBL" id="AJ131461">
    <property type="protein sequence ID" value="CAB52413.1"/>
    <property type="status" value="JOINED"/>
    <property type="molecule type" value="Genomic_DNA"/>
</dbReference>
<dbReference type="EMBL" id="BC054496">
    <property type="protein sequence ID" value="AAH54496.1"/>
    <property type="molecule type" value="mRNA"/>
</dbReference>
<dbReference type="EMBL" id="BC096308">
    <property type="protein sequence ID" value="AAH96308.1"/>
    <property type="molecule type" value="mRNA"/>
</dbReference>
<dbReference type="EMBL" id="BC096309">
    <property type="protein sequence ID" value="AAH96309.1"/>
    <property type="molecule type" value="mRNA"/>
</dbReference>
<dbReference type="EMBL" id="BC096310">
    <property type="protein sequence ID" value="AAH96310.1"/>
    <property type="molecule type" value="mRNA"/>
</dbReference>
<dbReference type="EMBL" id="BC096311">
    <property type="protein sequence ID" value="AAH96311.1"/>
    <property type="molecule type" value="mRNA"/>
</dbReference>
<dbReference type="CCDS" id="CCDS3284.1"/>
<dbReference type="PIR" id="JC4708">
    <property type="entry name" value="JC4708"/>
</dbReference>
<dbReference type="RefSeq" id="NP_001171271.1">
    <property type="nucleotide sequence ID" value="NM_001177800.2"/>
</dbReference>
<dbReference type="RefSeq" id="NP_004788.1">
    <property type="nucleotide sequence ID" value="NM_004797.4"/>
</dbReference>
<dbReference type="PDB" id="4DOU">
    <property type="method" value="X-ray"/>
    <property type="resolution" value="2.00 A"/>
    <property type="chains" value="A=104-244"/>
</dbReference>
<dbReference type="PDB" id="6U66">
    <property type="method" value="X-ray"/>
    <property type="resolution" value="0.99 A"/>
    <property type="chains" value="A/B/C=107-244"/>
</dbReference>
<dbReference type="PDB" id="6U6N">
    <property type="method" value="X-ray"/>
    <property type="resolution" value="2.15 A"/>
    <property type="chains" value="C=108-244"/>
</dbReference>
<dbReference type="PDBsum" id="4DOU"/>
<dbReference type="PDBsum" id="6U66"/>
<dbReference type="PDBsum" id="6U6N"/>
<dbReference type="SMR" id="Q15848"/>
<dbReference type="BioGRID" id="114771">
    <property type="interactions" value="104"/>
</dbReference>
<dbReference type="CORUM" id="Q15848"/>
<dbReference type="FunCoup" id="Q15848">
    <property type="interactions" value="249"/>
</dbReference>
<dbReference type="IntAct" id="Q15848">
    <property type="interactions" value="98"/>
</dbReference>
<dbReference type="STRING" id="9606.ENSP00000389814"/>
<dbReference type="TCDB" id="8.A.94.1.1">
    <property type="family name" value="the adiponectin (adiponectin) family"/>
</dbReference>
<dbReference type="GlyCosmos" id="Q15848">
    <property type="glycosylation" value="6 sites, 2 glycans"/>
</dbReference>
<dbReference type="GlyGen" id="Q15848">
    <property type="glycosylation" value="7 sites, 2 O-linked glycans (2 sites)"/>
</dbReference>
<dbReference type="iPTMnet" id="Q15848"/>
<dbReference type="PhosphoSitePlus" id="Q15848"/>
<dbReference type="BioMuta" id="ADIPOQ"/>
<dbReference type="DMDM" id="2493789"/>
<dbReference type="CPTAC" id="non-CPTAC-1057"/>
<dbReference type="MassIVE" id="Q15848"/>
<dbReference type="PaxDb" id="9606-ENSP00000389814"/>
<dbReference type="PeptideAtlas" id="Q15848"/>
<dbReference type="ProteomicsDB" id="60791"/>
<dbReference type="ABCD" id="Q15848">
    <property type="antibodies" value="5 sequenced antibodies"/>
</dbReference>
<dbReference type="Antibodypedia" id="19310">
    <property type="antibodies" value="1899 antibodies from 49 providers"/>
</dbReference>
<dbReference type="DNASU" id="9370"/>
<dbReference type="Ensembl" id="ENST00000320741.7">
    <property type="protein sequence ID" value="ENSP00000320709.2"/>
    <property type="gene ID" value="ENSG00000181092.10"/>
</dbReference>
<dbReference type="Ensembl" id="ENST00000444204.2">
    <property type="protein sequence ID" value="ENSP00000389814.2"/>
    <property type="gene ID" value="ENSG00000181092.10"/>
</dbReference>
<dbReference type="GeneID" id="9370"/>
<dbReference type="KEGG" id="hsa:9370"/>
<dbReference type="MANE-Select" id="ENST00000320741.7">
    <property type="protein sequence ID" value="ENSP00000320709.2"/>
    <property type="RefSeq nucleotide sequence ID" value="NM_004797.4"/>
    <property type="RefSeq protein sequence ID" value="NP_004788.1"/>
</dbReference>
<dbReference type="UCSC" id="uc003fra.4">
    <property type="organism name" value="human"/>
</dbReference>
<dbReference type="AGR" id="HGNC:13633"/>
<dbReference type="CTD" id="9370"/>
<dbReference type="DisGeNET" id="9370"/>
<dbReference type="GeneCards" id="ADIPOQ"/>
<dbReference type="HGNC" id="HGNC:13633">
    <property type="gene designation" value="ADIPOQ"/>
</dbReference>
<dbReference type="HPA" id="ENSG00000181092">
    <property type="expression patterns" value="Group enriched (adipose tissue, breast)"/>
</dbReference>
<dbReference type="MalaCards" id="ADIPOQ"/>
<dbReference type="MIM" id="605441">
    <property type="type" value="gene"/>
</dbReference>
<dbReference type="MIM" id="612556">
    <property type="type" value="phenotype"/>
</dbReference>
<dbReference type="neXtProt" id="NX_Q15848"/>
<dbReference type="OpenTargets" id="ENSG00000181092"/>
<dbReference type="PharmGKB" id="PA134933118"/>
<dbReference type="VEuPathDB" id="HostDB:ENSG00000181092"/>
<dbReference type="eggNOG" id="ENOG502QRY3">
    <property type="taxonomic scope" value="Eukaryota"/>
</dbReference>
<dbReference type="GeneTree" id="ENSGT00940000159828"/>
<dbReference type="HOGENOM" id="CLU_001074_0_2_1"/>
<dbReference type="InParanoid" id="Q15848"/>
<dbReference type="OMA" id="GTYYFAY"/>
<dbReference type="OrthoDB" id="8044756at2759"/>
<dbReference type="PAN-GO" id="Q15848">
    <property type="GO annotations" value="0 GO annotations based on evolutionary models"/>
</dbReference>
<dbReference type="PhylomeDB" id="Q15848"/>
<dbReference type="TreeFam" id="TF329591"/>
<dbReference type="PathwayCommons" id="Q15848"/>
<dbReference type="Reactome" id="R-HSA-163680">
    <property type="pathway name" value="AMPK inhibits chREBP transcriptional activation activity"/>
</dbReference>
<dbReference type="Reactome" id="R-HSA-381340">
    <property type="pathway name" value="Transcriptional regulation of white adipocyte differentiation"/>
</dbReference>
<dbReference type="Reactome" id="R-HSA-9841922">
    <property type="pathway name" value="MLL4 and MLL3 complexes regulate expression of PPARG target genes in adipogenesis and hepatic steatosis"/>
</dbReference>
<dbReference type="SignaLink" id="Q15848"/>
<dbReference type="SIGNOR" id="Q15848"/>
<dbReference type="BioGRID-ORCS" id="9370">
    <property type="hits" value="7 hits in 1146 CRISPR screens"/>
</dbReference>
<dbReference type="EvolutionaryTrace" id="Q15848"/>
<dbReference type="GeneWiki" id="Adiponectin"/>
<dbReference type="GenomeRNAi" id="9370"/>
<dbReference type="Pharos" id="Q15848">
    <property type="development level" value="Tbio"/>
</dbReference>
<dbReference type="PRO" id="PR:Q15848"/>
<dbReference type="Proteomes" id="UP000005640">
    <property type="component" value="Chromosome 3"/>
</dbReference>
<dbReference type="RNAct" id="Q15848">
    <property type="molecule type" value="protein"/>
</dbReference>
<dbReference type="Bgee" id="ENSG00000181092">
    <property type="expression patterns" value="Expressed in synovial joint and 114 other cell types or tissues"/>
</dbReference>
<dbReference type="ExpressionAtlas" id="Q15848">
    <property type="expression patterns" value="baseline and differential"/>
</dbReference>
<dbReference type="GO" id="GO:0009986">
    <property type="term" value="C:cell surface"/>
    <property type="evidence" value="ECO:0000314"/>
    <property type="project" value="BHF-UCL"/>
</dbReference>
<dbReference type="GO" id="GO:0005581">
    <property type="term" value="C:collagen trimer"/>
    <property type="evidence" value="ECO:0007669"/>
    <property type="project" value="UniProtKB-KW"/>
</dbReference>
<dbReference type="GO" id="GO:0062023">
    <property type="term" value="C:collagen-containing extracellular matrix"/>
    <property type="evidence" value="ECO:0007005"/>
    <property type="project" value="BHF-UCL"/>
</dbReference>
<dbReference type="GO" id="GO:0005783">
    <property type="term" value="C:endoplasmic reticulum"/>
    <property type="evidence" value="ECO:0000250"/>
    <property type="project" value="UniProtKB"/>
</dbReference>
<dbReference type="GO" id="GO:0005576">
    <property type="term" value="C:extracellular region"/>
    <property type="evidence" value="ECO:0000314"/>
    <property type="project" value="BHF-UCL"/>
</dbReference>
<dbReference type="GO" id="GO:0005615">
    <property type="term" value="C:extracellular space"/>
    <property type="evidence" value="ECO:0000314"/>
    <property type="project" value="UniProtKB"/>
</dbReference>
<dbReference type="GO" id="GO:0005125">
    <property type="term" value="F:cytokine activity"/>
    <property type="evidence" value="ECO:0000303"/>
    <property type="project" value="BHF-UCL"/>
</dbReference>
<dbReference type="GO" id="GO:0005179">
    <property type="term" value="F:hormone activity"/>
    <property type="evidence" value="ECO:0000314"/>
    <property type="project" value="BHF-UCL"/>
</dbReference>
<dbReference type="GO" id="GO:0042803">
    <property type="term" value="F:protein homodimerization activity"/>
    <property type="evidence" value="ECO:0000353"/>
    <property type="project" value="BHF-UCL"/>
</dbReference>
<dbReference type="GO" id="GO:0043539">
    <property type="term" value="F:protein serine/threonine kinase activator activity"/>
    <property type="evidence" value="ECO:0007669"/>
    <property type="project" value="Ensembl"/>
</dbReference>
<dbReference type="GO" id="GO:0033691">
    <property type="term" value="F:sialic acid binding"/>
    <property type="evidence" value="ECO:0000314"/>
    <property type="project" value="UniProtKB"/>
</dbReference>
<dbReference type="GO" id="GO:0005102">
    <property type="term" value="F:signaling receptor binding"/>
    <property type="evidence" value="ECO:0000250"/>
    <property type="project" value="UniProtKB"/>
</dbReference>
<dbReference type="GO" id="GO:0033211">
    <property type="term" value="P:adiponectin-activated signaling pathway"/>
    <property type="evidence" value="ECO:0000314"/>
    <property type="project" value="ARUK-UCL"/>
</dbReference>
<dbReference type="GO" id="GO:0050873">
    <property type="term" value="P:brown fat cell differentiation"/>
    <property type="evidence" value="ECO:0000250"/>
    <property type="project" value="UniProtKB"/>
</dbReference>
<dbReference type="GO" id="GO:0071320">
    <property type="term" value="P:cellular response to cAMP"/>
    <property type="evidence" value="ECO:0007669"/>
    <property type="project" value="Ensembl"/>
</dbReference>
<dbReference type="GO" id="GO:0071872">
    <property type="term" value="P:cellular response to epinephrine stimulus"/>
    <property type="evidence" value="ECO:0007669"/>
    <property type="project" value="Ensembl"/>
</dbReference>
<dbReference type="GO" id="GO:0032869">
    <property type="term" value="P:cellular response to insulin stimulus"/>
    <property type="evidence" value="ECO:0000250"/>
    <property type="project" value="UniProtKB"/>
</dbReference>
<dbReference type="GO" id="GO:0071466">
    <property type="term" value="P:cellular response to xenobiotic stimulus"/>
    <property type="evidence" value="ECO:0000250"/>
    <property type="project" value="UniProtKB"/>
</dbReference>
<dbReference type="GO" id="GO:0007623">
    <property type="term" value="P:circadian rhythm"/>
    <property type="evidence" value="ECO:0007669"/>
    <property type="project" value="Ensembl"/>
</dbReference>
<dbReference type="GO" id="GO:0070994">
    <property type="term" value="P:detection of oxidative stress"/>
    <property type="evidence" value="ECO:0000250"/>
    <property type="project" value="UniProtKB"/>
</dbReference>
<dbReference type="GO" id="GO:0006635">
    <property type="term" value="P:fatty acid beta-oxidation"/>
    <property type="evidence" value="ECO:0000250"/>
    <property type="project" value="UniProtKB"/>
</dbReference>
<dbReference type="GO" id="GO:0019395">
    <property type="term" value="P:fatty acid oxidation"/>
    <property type="evidence" value="ECO:0000250"/>
    <property type="project" value="UniProtKB"/>
</dbReference>
<dbReference type="GO" id="GO:0010467">
    <property type="term" value="P:gene expression"/>
    <property type="evidence" value="ECO:0007669"/>
    <property type="project" value="Ensembl"/>
</dbReference>
<dbReference type="GO" id="GO:0006091">
    <property type="term" value="P:generation of precursor metabolites and energy"/>
    <property type="evidence" value="ECO:0000304"/>
    <property type="project" value="ProtInc"/>
</dbReference>
<dbReference type="GO" id="GO:0042593">
    <property type="term" value="P:glucose homeostasis"/>
    <property type="evidence" value="ECO:0000250"/>
    <property type="project" value="UniProtKB"/>
</dbReference>
<dbReference type="GO" id="GO:0006006">
    <property type="term" value="P:glucose metabolic process"/>
    <property type="evidence" value="ECO:0000250"/>
    <property type="project" value="UniProtKB"/>
</dbReference>
<dbReference type="GO" id="GO:0034383">
    <property type="term" value="P:low-density lipoprotein particle clearance"/>
    <property type="evidence" value="ECO:0000314"/>
    <property type="project" value="BHF-UCL"/>
</dbReference>
<dbReference type="GO" id="GO:0045776">
    <property type="term" value="P:negative regulation of blood pressure"/>
    <property type="evidence" value="ECO:0000314"/>
    <property type="project" value="UniProtKB"/>
</dbReference>
<dbReference type="GO" id="GO:0043124">
    <property type="term" value="P:negative regulation of canonical NF-kappaB signal transduction"/>
    <property type="evidence" value="ECO:0000314"/>
    <property type="project" value="BHF-UCL"/>
</dbReference>
<dbReference type="GO" id="GO:0030336">
    <property type="term" value="P:negative regulation of cell migration"/>
    <property type="evidence" value="ECO:0000250"/>
    <property type="project" value="UniProtKB"/>
</dbReference>
<dbReference type="GO" id="GO:0060621">
    <property type="term" value="P:negative regulation of cholesterol import"/>
    <property type="evidence" value="ECO:0000314"/>
    <property type="project" value="BHF-UCL"/>
</dbReference>
<dbReference type="GO" id="GO:0120163">
    <property type="term" value="P:negative regulation of cold-induced thermogenesis"/>
    <property type="evidence" value="ECO:0000250"/>
    <property type="project" value="YuBioLab"/>
</dbReference>
<dbReference type="GO" id="GO:2000279">
    <property type="term" value="P:negative regulation of DNA biosynthetic process"/>
    <property type="evidence" value="ECO:0000314"/>
    <property type="project" value="UniProtKB"/>
</dbReference>
<dbReference type="GO" id="GO:0045892">
    <property type="term" value="P:negative regulation of DNA-templated transcription"/>
    <property type="evidence" value="ECO:0000314"/>
    <property type="project" value="UniProtKB"/>
</dbReference>
<dbReference type="GO" id="GO:0070373">
    <property type="term" value="P:negative regulation of ERK1 and ERK2 cascade"/>
    <property type="evidence" value="ECO:0000314"/>
    <property type="project" value="UniProtKB"/>
</dbReference>
<dbReference type="GO" id="GO:0045599">
    <property type="term" value="P:negative regulation of fat cell differentiation"/>
    <property type="evidence" value="ECO:0000314"/>
    <property type="project" value="BHF-UCL"/>
</dbReference>
<dbReference type="GO" id="GO:0045721">
    <property type="term" value="P:negative regulation of gluconeogenesis"/>
    <property type="evidence" value="ECO:0000250"/>
    <property type="project" value="BHF-UCL"/>
</dbReference>
<dbReference type="GO" id="GO:0030853">
    <property type="term" value="P:negative regulation of granulocyte differentiation"/>
    <property type="evidence" value="ECO:0000314"/>
    <property type="project" value="BHF-UCL"/>
</dbReference>
<dbReference type="GO" id="GO:0034115">
    <property type="term" value="P:negative regulation of heterotypic cell-cell adhesion"/>
    <property type="evidence" value="ECO:0000314"/>
    <property type="project" value="BHF-UCL"/>
</dbReference>
<dbReference type="GO" id="GO:0046888">
    <property type="term" value="P:negative regulation of hormone secretion"/>
    <property type="evidence" value="ECO:0007669"/>
    <property type="project" value="Ensembl"/>
</dbReference>
<dbReference type="GO" id="GO:0050728">
    <property type="term" value="P:negative regulation of inflammatory response"/>
    <property type="evidence" value="ECO:0000250"/>
    <property type="project" value="UniProtKB"/>
</dbReference>
<dbReference type="GO" id="GO:0090317">
    <property type="term" value="P:negative regulation of intracellular protein transport"/>
    <property type="evidence" value="ECO:0000314"/>
    <property type="project" value="UniProtKB"/>
</dbReference>
<dbReference type="GO" id="GO:0010745">
    <property type="term" value="P:negative regulation of macrophage derived foam cell differentiation"/>
    <property type="evidence" value="ECO:0000314"/>
    <property type="project" value="BHF-UCL"/>
</dbReference>
<dbReference type="GO" id="GO:0045650">
    <property type="term" value="P:negative regulation of macrophage differentiation"/>
    <property type="evidence" value="ECO:0000314"/>
    <property type="project" value="BHF-UCL"/>
</dbReference>
<dbReference type="GO" id="GO:0043407">
    <property type="term" value="P:negative regulation of MAP kinase activity"/>
    <property type="evidence" value="ECO:0000250"/>
    <property type="project" value="UniProtKB"/>
</dbReference>
<dbReference type="GO" id="GO:2000590">
    <property type="term" value="P:negative regulation of metanephric mesenchymal cell migration"/>
    <property type="evidence" value="ECO:0000250"/>
    <property type="project" value="UniProtKB"/>
</dbReference>
<dbReference type="GO" id="GO:0050765">
    <property type="term" value="P:negative regulation of phagocytosis"/>
    <property type="evidence" value="ECO:0000314"/>
    <property type="project" value="BHF-UCL"/>
</dbReference>
<dbReference type="GO" id="GO:0010642">
    <property type="term" value="P:negative regulation of platelet-derived growth factor receptor signaling pathway"/>
    <property type="evidence" value="ECO:0000314"/>
    <property type="project" value="UniProtKB"/>
</dbReference>
<dbReference type="GO" id="GO:2000584">
    <property type="term" value="P:negative regulation of platelet-derived growth factor receptor-alpha signaling pathway"/>
    <property type="evidence" value="ECO:0000250"/>
    <property type="project" value="UniProtKB"/>
</dbReference>
<dbReference type="GO" id="GO:0031953">
    <property type="term" value="P:negative regulation of protein autophosphorylation"/>
    <property type="evidence" value="ECO:0000314"/>
    <property type="project" value="UniProtKB"/>
</dbReference>
<dbReference type="GO" id="GO:1900121">
    <property type="term" value="P:negative regulation of receptor binding"/>
    <property type="evidence" value="ECO:0000314"/>
    <property type="project" value="UniProtKB"/>
</dbReference>
<dbReference type="GO" id="GO:0048261">
    <property type="term" value="P:negative regulation of receptor-mediated endocytosis"/>
    <property type="evidence" value="ECO:0000314"/>
    <property type="project" value="BHF-UCL"/>
</dbReference>
<dbReference type="GO" id="GO:0050805">
    <property type="term" value="P:negative regulation of synaptic transmission"/>
    <property type="evidence" value="ECO:0000314"/>
    <property type="project" value="UniProtKB"/>
</dbReference>
<dbReference type="GO" id="GO:0032720">
    <property type="term" value="P:negative regulation of tumor necrosis factor production"/>
    <property type="evidence" value="ECO:0000314"/>
    <property type="project" value="BHF-UCL"/>
</dbReference>
<dbReference type="GO" id="GO:0010804">
    <property type="term" value="P:negative regulation of tumor necrosis factor-mediated signaling pathway"/>
    <property type="evidence" value="ECO:0000314"/>
    <property type="project" value="BHF-UCL"/>
</dbReference>
<dbReference type="GO" id="GO:1904753">
    <property type="term" value="P:negative regulation of vascular associated smooth muscle cell migration"/>
    <property type="evidence" value="ECO:0000314"/>
    <property type="project" value="UniProtKB"/>
</dbReference>
<dbReference type="GO" id="GO:1904706">
    <property type="term" value="P:negative regulation of vascular associated smooth muscle cell proliferation"/>
    <property type="evidence" value="ECO:0000314"/>
    <property type="project" value="UniProtKB"/>
</dbReference>
<dbReference type="GO" id="GO:2000481">
    <property type="term" value="P:positive regulation of cAMP-dependent protein kinase activity"/>
    <property type="evidence" value="ECO:0000314"/>
    <property type="project" value="UniProtKB"/>
</dbReference>
<dbReference type="GO" id="GO:0141163">
    <property type="term" value="P:positive regulation of cAMP/PKA signal transduction"/>
    <property type="evidence" value="ECO:0000314"/>
    <property type="project" value="BHF-UCL"/>
</dbReference>
<dbReference type="GO" id="GO:0043123">
    <property type="term" value="P:positive regulation of canonical NF-kappaB signal transduction"/>
    <property type="evidence" value="ECO:0000250"/>
    <property type="project" value="UniProtKB"/>
</dbReference>
<dbReference type="GO" id="GO:0010875">
    <property type="term" value="P:positive regulation of cholesterol efflux"/>
    <property type="evidence" value="ECO:0000314"/>
    <property type="project" value="BHF-UCL"/>
</dbReference>
<dbReference type="GO" id="GO:0120162">
    <property type="term" value="P:positive regulation of cold-induced thermogenesis"/>
    <property type="evidence" value="ECO:0000250"/>
    <property type="project" value="YuBioLab"/>
</dbReference>
<dbReference type="GO" id="GO:0046326">
    <property type="term" value="P:positive regulation of D-glucose import"/>
    <property type="evidence" value="ECO:0000250"/>
    <property type="project" value="BHF-UCL"/>
</dbReference>
<dbReference type="GO" id="GO:0045923">
    <property type="term" value="P:positive regulation of fatty acid metabolic process"/>
    <property type="evidence" value="ECO:0000250"/>
    <property type="project" value="BHF-UCL"/>
</dbReference>
<dbReference type="GO" id="GO:2000467">
    <property type="term" value="P:positive regulation of glycogen (starch) synthase activity"/>
    <property type="evidence" value="ECO:0000250"/>
    <property type="project" value="UniProtKB"/>
</dbReference>
<dbReference type="GO" id="GO:0032757">
    <property type="term" value="P:positive regulation of interleukin-8 production"/>
    <property type="evidence" value="ECO:0000314"/>
    <property type="project" value="UniProtKB"/>
</dbReference>
<dbReference type="GO" id="GO:2000478">
    <property type="term" value="P:positive regulation of metanephric podocyte development"/>
    <property type="evidence" value="ECO:0000250"/>
    <property type="project" value="UniProtKB"/>
</dbReference>
<dbReference type="GO" id="GO:0071639">
    <property type="term" value="P:positive regulation of monocyte chemotactic protein-1 production"/>
    <property type="evidence" value="ECO:0000314"/>
    <property type="project" value="UniProtKB"/>
</dbReference>
<dbReference type="GO" id="GO:0033034">
    <property type="term" value="P:positive regulation of myeloid cell apoptotic process"/>
    <property type="evidence" value="ECO:0000314"/>
    <property type="project" value="BHF-UCL"/>
</dbReference>
<dbReference type="GO" id="GO:0001934">
    <property type="term" value="P:positive regulation of protein phosphorylation"/>
    <property type="evidence" value="ECO:0000314"/>
    <property type="project" value="UniProtKB"/>
</dbReference>
<dbReference type="GO" id="GO:2000534">
    <property type="term" value="P:positive regulation of renal albumin absorption"/>
    <property type="evidence" value="ECO:0000314"/>
    <property type="project" value="UniProtKB"/>
</dbReference>
<dbReference type="GO" id="GO:0009967">
    <property type="term" value="P:positive regulation of signal transduction"/>
    <property type="evidence" value="ECO:0000250"/>
    <property type="project" value="BHF-UCL"/>
</dbReference>
<dbReference type="GO" id="GO:0072659">
    <property type="term" value="P:protein localization to plasma membrane"/>
    <property type="evidence" value="ECO:0000314"/>
    <property type="project" value="UniProtKB"/>
</dbReference>
<dbReference type="GO" id="GO:0010906">
    <property type="term" value="P:regulation of glucose metabolic process"/>
    <property type="evidence" value="ECO:0000314"/>
    <property type="project" value="UniProtKB"/>
</dbReference>
<dbReference type="GO" id="GO:0014823">
    <property type="term" value="P:response to activity"/>
    <property type="evidence" value="ECO:0007669"/>
    <property type="project" value="Ensembl"/>
</dbReference>
<dbReference type="GO" id="GO:0009617">
    <property type="term" value="P:response to bacterium"/>
    <property type="evidence" value="ECO:0007669"/>
    <property type="project" value="Ensembl"/>
</dbReference>
<dbReference type="GO" id="GO:0045471">
    <property type="term" value="P:response to ethanol"/>
    <property type="evidence" value="ECO:0007669"/>
    <property type="project" value="Ensembl"/>
</dbReference>
<dbReference type="GO" id="GO:0051384">
    <property type="term" value="P:response to glucocorticoid"/>
    <property type="evidence" value="ECO:0007669"/>
    <property type="project" value="Ensembl"/>
</dbReference>
<dbReference type="GO" id="GO:0009749">
    <property type="term" value="P:response to glucose"/>
    <property type="evidence" value="ECO:0000250"/>
    <property type="project" value="BHF-UCL"/>
</dbReference>
<dbReference type="GO" id="GO:0001666">
    <property type="term" value="P:response to hypoxia"/>
    <property type="evidence" value="ECO:0007669"/>
    <property type="project" value="Ensembl"/>
</dbReference>
<dbReference type="GO" id="GO:0070543">
    <property type="term" value="P:response to linoleic acid"/>
    <property type="evidence" value="ECO:0007669"/>
    <property type="project" value="Ensembl"/>
</dbReference>
<dbReference type="GO" id="GO:0007584">
    <property type="term" value="P:response to nutrient"/>
    <property type="evidence" value="ECO:0007669"/>
    <property type="project" value="Ensembl"/>
</dbReference>
<dbReference type="GO" id="GO:0009744">
    <property type="term" value="P:response to sucrose"/>
    <property type="evidence" value="ECO:0007669"/>
    <property type="project" value="Ensembl"/>
</dbReference>
<dbReference type="GO" id="GO:0034612">
    <property type="term" value="P:response to tumor necrosis factor"/>
    <property type="evidence" value="ECO:0000314"/>
    <property type="project" value="BHF-UCL"/>
</dbReference>
<dbReference type="FunFam" id="2.60.120.40:FF:000001">
    <property type="entry name" value="Complement C1q B chain"/>
    <property type="match status" value="1"/>
</dbReference>
<dbReference type="Gene3D" id="2.60.120.40">
    <property type="match status" value="1"/>
</dbReference>
<dbReference type="InterPro" id="IPR001073">
    <property type="entry name" value="C1q_dom"/>
</dbReference>
<dbReference type="InterPro" id="IPR008160">
    <property type="entry name" value="Collagen"/>
</dbReference>
<dbReference type="InterPro" id="IPR050392">
    <property type="entry name" value="Collagen/C1q_domain"/>
</dbReference>
<dbReference type="InterPro" id="IPR008983">
    <property type="entry name" value="Tumour_necrosis_fac-like_dom"/>
</dbReference>
<dbReference type="PANTHER" id="PTHR15427:SF20">
    <property type="entry name" value="ADIPONECTIN"/>
    <property type="match status" value="1"/>
</dbReference>
<dbReference type="PANTHER" id="PTHR15427">
    <property type="entry name" value="EMILIN ELASTIN MICROFIBRIL INTERFACE-LOCATED PROTEIN ELASTIN MICROFIBRIL INTERFACER"/>
    <property type="match status" value="1"/>
</dbReference>
<dbReference type="Pfam" id="PF00386">
    <property type="entry name" value="C1q"/>
    <property type="match status" value="1"/>
</dbReference>
<dbReference type="Pfam" id="PF01391">
    <property type="entry name" value="Collagen"/>
    <property type="match status" value="1"/>
</dbReference>
<dbReference type="PRINTS" id="PR00007">
    <property type="entry name" value="COMPLEMNTC1Q"/>
</dbReference>
<dbReference type="SMART" id="SM00110">
    <property type="entry name" value="C1Q"/>
    <property type="match status" value="1"/>
</dbReference>
<dbReference type="SUPFAM" id="SSF49842">
    <property type="entry name" value="TNF-like"/>
    <property type="match status" value="1"/>
</dbReference>
<dbReference type="PROSITE" id="PS50871">
    <property type="entry name" value="C1Q"/>
    <property type="match status" value="1"/>
</dbReference>
<comment type="function">
    <text evidence="7">Important adipokine involved in the control of fat metabolism and insulin sensitivity, with direct anti-diabetic, anti-atherogenic and anti-inflammatory activities. Stimulates AMPK phosphorylation and activation in the liver and the skeletal muscle, enhancing glucose utilization and fatty-acid combustion. Antagonizes TNF-alpha by negatively regulating its expression in various tissues such as liver and macrophages, and also by counteracting its effects. Inhibits endothelial NF-kappa-B signaling through a cAMP-dependent pathway. May play a role in cell growth, angiogenesis and tissue remodeling by binding and sequestering various growth factors with distinct binding affinities, depending on the type of complex, LMW, MMW or HMW.</text>
</comment>
<comment type="activity regulation">
    <text evidence="3">Polymerization and secretion of adiponectin is inhibited by succination of cysteine residues by the Krebs cycle intermediate fumarate, which leads to S-(2-succinyl)cysteine residues.</text>
</comment>
<comment type="subunit">
    <text evidence="3">Homomultimer. Forms trimers, hexamers and 12- to 18-mers. The trimers (low molecular weight complexes / LMW) are assembled via non-covalent interactions of the collagen-like domains in a triple helix and hydrophobic interactions within the globular C1q domain. Several trimers can associate to form disulfide-linked hexamers (middle molecular weight complexes / MMW) and larger complexes (higher molecular weight / HMW). The HMW-complex assembly is also modulated by the degree of lysine hydroxylation and glycosylation. LMW, MMW and HMW complexes bind to HBEGF, MMW and HMW complexes bind to PDGFB, and HMW complex binds to FGF2. Interacts with CTRP9 via the C1q domain (heterotrimeric complex).</text>
</comment>
<comment type="interaction">
    <interactant intactId="EBI-10827839">
        <id>Q15848</id>
    </interactant>
    <interactant intactId="EBI-19125216">
        <id>Q86WK6</id>
        <label>AMIGO1</label>
    </interactant>
    <organismsDiffer>false</organismsDiffer>
    <experiments>3</experiments>
</comment>
<comment type="interaction">
    <interactant intactId="EBI-10827839">
        <id>Q15848</id>
    </interactant>
    <interactant intactId="EBI-13059134">
        <id>Q13520</id>
        <label>AQP6</label>
    </interactant>
    <organismsDiffer>false</organismsDiffer>
    <experiments>3</experiments>
</comment>
<comment type="interaction">
    <interactant intactId="EBI-10827839">
        <id>Q15848</id>
    </interactant>
    <interactant intactId="EBI-12808270">
        <id>P07307-3</id>
        <label>ASGR2</label>
    </interactant>
    <organismsDiffer>false</organismsDiffer>
    <experiments>3</experiments>
</comment>
<comment type="interaction">
    <interactant intactId="EBI-10827839">
        <id>Q15848</id>
    </interactant>
    <interactant intactId="EBI-747430">
        <id>Q9BXK5</id>
        <label>BCL2L13</label>
    </interactant>
    <organismsDiffer>false</organismsDiffer>
    <experiments>3</experiments>
</comment>
<comment type="interaction">
    <interactant intactId="EBI-10827839">
        <id>Q15848</id>
    </interactant>
    <interactant intactId="EBI-700794">
        <id>Q13323</id>
        <label>BIK</label>
    </interactant>
    <organismsDiffer>false</organismsDiffer>
    <experiments>3</experiments>
</comment>
<comment type="interaction">
    <interactant intactId="EBI-10827839">
        <id>Q15848</id>
    </interactant>
    <interactant intactId="EBI-849893">
        <id>O60238</id>
        <label>BNIP3L</label>
    </interactant>
    <organismsDiffer>false</organismsDiffer>
    <experiments>3</experiments>
</comment>
<comment type="interaction">
    <interactant intactId="EBI-10827839">
        <id>Q15848</id>
    </interactant>
    <interactant intactId="EBI-7996695">
        <id>Q8WZ55</id>
        <label>BSND</label>
    </interactant>
    <organismsDiffer>false</organismsDiffer>
    <experiments>3</experiments>
</comment>
<comment type="interaction">
    <interactant intactId="EBI-10827839">
        <id>Q15848</id>
    </interactant>
    <interactant intactId="EBI-17953245">
        <id>Q6UXG8-3</id>
        <label>BTNL9</label>
    </interactant>
    <organismsDiffer>false</organismsDiffer>
    <experiments>3</experiments>
</comment>
<comment type="interaction">
    <interactant intactId="EBI-10827839">
        <id>Q15848</id>
    </interactant>
    <interactant intactId="EBI-1748958">
        <id>P49069</id>
        <label>CAMLG</label>
    </interactant>
    <organismsDiffer>false</organismsDiffer>
    <experiments>3</experiments>
</comment>
<comment type="interaction">
    <interactant intactId="EBI-10827839">
        <id>Q15848</id>
    </interactant>
    <interactant intactId="EBI-947033">
        <id>Q8WV48</id>
        <label>CCDC107</label>
    </interactant>
    <organismsDiffer>false</organismsDiffer>
    <experiments>3</experiments>
</comment>
<comment type="interaction">
    <interactant intactId="EBI-10827839">
        <id>Q15848</id>
    </interactant>
    <interactant intactId="EBI-12824513">
        <id>Q8TD46-4</id>
        <label>CD200R1</label>
    </interactant>
    <organismsDiffer>false</organismsDiffer>
    <experiments>3</experiments>
</comment>
<comment type="interaction">
    <interactant intactId="EBI-10827839">
        <id>Q15848</id>
    </interactant>
    <interactant intactId="EBI-7797864">
        <id>P11912</id>
        <label>CD79A</label>
    </interactant>
    <organismsDiffer>false</organismsDiffer>
    <experiments>3</experiments>
</comment>
<comment type="interaction">
    <interactant intactId="EBI-10827839">
        <id>Q15848</id>
    </interactant>
    <interactant intactId="EBI-18341636">
        <id>O95484</id>
        <label>CLDN9</label>
    </interactant>
    <organismsDiffer>false</organismsDiffer>
    <experiments>3</experiments>
</comment>
<comment type="interaction">
    <interactant intactId="EBI-10827839">
        <id>Q15848</id>
    </interactant>
    <interactant intactId="EBI-2873246">
        <id>Q8IUN9</id>
        <label>CLEC10A</label>
    </interactant>
    <organismsDiffer>false</organismsDiffer>
    <experiments>3</experiments>
</comment>
<comment type="interaction">
    <interactant intactId="EBI-10827839">
        <id>Q15848</id>
    </interactant>
    <interactant intactId="EBI-11749983">
        <id>Q9UHP7-3</id>
        <label>CLEC2D</label>
    </interactant>
    <organismsDiffer>false</organismsDiffer>
    <experiments>3</experiments>
</comment>
<comment type="interaction">
    <interactant intactId="EBI-10827839">
        <id>Q15848</id>
    </interactant>
    <interactant intactId="EBI-2835940">
        <id>P34972</id>
        <label>CNR2</label>
    </interactant>
    <organismsDiffer>false</organismsDiffer>
    <experiments>3</experiments>
</comment>
<comment type="interaction">
    <interactant intactId="EBI-10827839">
        <id>Q15848</id>
    </interactant>
    <interactant intactId="EBI-724524">
        <id>O75208</id>
        <label>COQ9</label>
    </interactant>
    <organismsDiffer>false</organismsDiffer>
    <experiments>3</experiments>
</comment>
<comment type="interaction">
    <interactant intactId="EBI-10827839">
        <id>Q15848</id>
    </interactant>
    <interactant intactId="EBI-18013275">
        <id>Q7Z7G2</id>
        <label>CPLX4</label>
    </interactant>
    <organismsDiffer>false</organismsDiffer>
    <experiments>3</experiments>
</comment>
<comment type="interaction">
    <interactant intactId="EBI-10827839">
        <id>Q15848</id>
    </interactant>
    <interactant intactId="EBI-6942903">
        <id>Q96BA8</id>
        <label>CREB3L1</label>
    </interactant>
    <organismsDiffer>false</organismsDiffer>
    <experiments>3</experiments>
</comment>
<comment type="interaction">
    <interactant intactId="EBI-10827839">
        <id>Q15848</id>
    </interactant>
    <interactant intactId="EBI-2680384">
        <id>Q9BQA9</id>
        <label>CYBC1</label>
    </interactant>
    <organismsDiffer>false</organismsDiffer>
    <experiments>3</experiments>
</comment>
<comment type="interaction">
    <interactant intactId="EBI-10827839">
        <id>Q15848</id>
    </interactant>
    <interactant intactId="EBI-946830">
        <id>P30040</id>
        <label>ERP29</label>
    </interactant>
    <organismsDiffer>false</organismsDiffer>
    <experiments>3</experiments>
</comment>
<comment type="interaction">
    <interactant intactId="EBI-10827839">
        <id>Q15848</id>
    </interactant>
    <interactant intactId="EBI-18304435">
        <id>Q5JX71</id>
        <label>FAM209A</label>
    </interactant>
    <organismsDiffer>false</organismsDiffer>
    <experiments>3</experiments>
</comment>
<comment type="interaction">
    <interactant intactId="EBI-10827839">
        <id>Q15848</id>
    </interactant>
    <interactant intactId="EBI-356658">
        <id>P49327</id>
        <label>FASN</label>
    </interactant>
    <organismsDiffer>false</organismsDiffer>
    <experiments>3</experiments>
</comment>
<comment type="interaction">
    <interactant intactId="EBI-10827839">
        <id>Q15848</id>
    </interactant>
    <interactant intactId="EBI-2869867">
        <id>P12314</id>
        <label>FCGR1A</label>
    </interactant>
    <organismsDiffer>false</organismsDiffer>
    <experiments>3</experiments>
</comment>
<comment type="interaction">
    <interactant intactId="EBI-10827839">
        <id>Q15848</id>
    </interactant>
    <interactant intactId="EBI-3918971">
        <id>Q9Y680</id>
        <label>FKBP7</label>
    </interactant>
    <organismsDiffer>false</organismsDiffer>
    <experiments>3</experiments>
</comment>
<comment type="interaction">
    <interactant intactId="EBI-10827839">
        <id>Q15848</id>
    </interactant>
    <interactant intactId="EBI-12142257">
        <id>Q8TBE3</id>
        <label>FNDC9</label>
    </interactant>
    <organismsDiffer>false</organismsDiffer>
    <experiments>3</experiments>
</comment>
<comment type="interaction">
    <interactant intactId="EBI-10827839">
        <id>Q15848</id>
    </interactant>
    <interactant intactId="EBI-13345167">
        <id>Q8TDT2</id>
        <label>GPR152</label>
    </interactant>
    <organismsDiffer>false</organismsDiffer>
    <experiments>3</experiments>
</comment>
<comment type="interaction">
    <interactant intactId="EBI-10827839">
        <id>Q15848</id>
    </interactant>
    <interactant intactId="EBI-18076404">
        <id>O15529</id>
        <label>GPR42</label>
    </interactant>
    <organismsDiffer>false</organismsDiffer>
    <experiments>3</experiments>
</comment>
<comment type="interaction">
    <interactant intactId="EBI-10827839">
        <id>Q15848</id>
    </interactant>
    <interactant intactId="EBI-1052304">
        <id>Q8NBQ5</id>
        <label>HSD17B11</label>
    </interactant>
    <organismsDiffer>false</organismsDiffer>
    <experiments>3</experiments>
</comment>
<comment type="interaction">
    <interactant intactId="EBI-10827839">
        <id>Q15848</id>
    </interactant>
    <interactant intactId="EBI-466029">
        <id>P42858</id>
        <label>HTT</label>
    </interactant>
    <organismsDiffer>false</organismsDiffer>
    <experiments>9</experiments>
</comment>
<comment type="interaction">
    <interactant intactId="EBI-10827839">
        <id>Q15848</id>
    </interactant>
    <interactant intactId="EBI-3905457">
        <id>P38484</id>
        <label>IFNGR2</label>
    </interactant>
    <organismsDiffer>false</organismsDiffer>
    <experiments>3</experiments>
</comment>
<comment type="interaction">
    <interactant intactId="EBI-10827839">
        <id>Q15848</id>
    </interactant>
    <interactant intactId="EBI-749265">
        <id>Q8N6L0</id>
        <label>KASH5</label>
    </interactant>
    <organismsDiffer>false</organismsDiffer>
    <experiments>3</experiments>
</comment>
<comment type="interaction">
    <interactant intactId="EBI-10827839">
        <id>Q15848</id>
    </interactant>
    <interactant intactId="EBI-3934936">
        <id>O95279</id>
        <label>KCNK5</label>
    </interactant>
    <organismsDiffer>false</organismsDiffer>
    <experiments>3</experiments>
</comment>
<comment type="interaction">
    <interactant intactId="EBI-10827839">
        <id>Q15848</id>
    </interactant>
    <interactant intactId="EBI-746662">
        <id>P23276</id>
        <label>KEL</label>
    </interactant>
    <organismsDiffer>false</organismsDiffer>
    <experiments>3</experiments>
</comment>
<comment type="interaction">
    <interactant intactId="EBI-10827839">
        <id>Q15848</id>
    </interactant>
    <interactant intactId="EBI-11956541">
        <id>Q9GZY8-5</id>
        <label>MFF</label>
    </interactant>
    <organismsDiffer>false</organismsDiffer>
    <experiments>3</experiments>
</comment>
<comment type="interaction">
    <interactant intactId="EBI-10827839">
        <id>Q15848</id>
    </interactant>
    <interactant intactId="EBI-373355">
        <id>Q5SR56</id>
        <label>MFSD14B</label>
    </interactant>
    <organismsDiffer>false</organismsDiffer>
    <experiments>3</experiments>
</comment>
<comment type="interaction">
    <interactant intactId="EBI-10827839">
        <id>Q15848</id>
    </interactant>
    <interactant intactId="EBI-2858252">
        <id>Q6ZSS7</id>
        <label>MFSD6</label>
    </interactant>
    <organismsDiffer>false</organismsDiffer>
    <experiments>3</experiments>
</comment>
<comment type="interaction">
    <interactant intactId="EBI-10827839">
        <id>Q15848</id>
    </interactant>
    <interactant intactId="EBI-5454865">
        <id>Q6IN84</id>
        <label>MRM1</label>
    </interactant>
    <organismsDiffer>false</organismsDiffer>
    <experiments>3</experiments>
</comment>
<comment type="interaction">
    <interactant intactId="EBI-10827839">
        <id>Q15848</id>
    </interactant>
    <interactant intactId="EBI-12806656">
        <id>Q96HJ5</id>
        <label>MS4A3</label>
    </interactant>
    <organismsDiffer>false</organismsDiffer>
    <experiments>3</experiments>
</comment>
<comment type="interaction">
    <interactant intactId="EBI-10827839">
        <id>Q15848</id>
    </interactant>
    <interactant intactId="EBI-17263240">
        <id>P15941-11</id>
        <label>MUC1</label>
    </interactant>
    <organismsDiffer>false</organismsDiffer>
    <experiments>3</experiments>
</comment>
<comment type="interaction">
    <interactant intactId="EBI-10827839">
        <id>Q15848</id>
    </interactant>
    <interactant intactId="EBI-10969203">
        <id>O14524-2</id>
        <label>NEMP1</label>
    </interactant>
    <organismsDiffer>false</organismsDiffer>
    <experiments>3</experiments>
</comment>
<comment type="interaction">
    <interactant intactId="EBI-10827839">
        <id>Q15848</id>
    </interactant>
    <interactant intactId="EBI-594836">
        <id>O00623</id>
        <label>PEX12</label>
    </interactant>
    <organismsDiffer>false</organismsDiffer>
    <experiments>3</experiments>
</comment>
<comment type="interaction">
    <interactant intactId="EBI-10827839">
        <id>Q15848</id>
    </interactant>
    <interactant intactId="EBI-12902928">
        <id>Q8NFJ6</id>
        <label>PROKR2</label>
    </interactant>
    <organismsDiffer>false</organismsDiffer>
    <experiments>3</experiments>
</comment>
<comment type="interaction">
    <interactant intactId="EBI-10827839">
        <id>Q15848</id>
    </interactant>
    <interactant intactId="EBI-3919694">
        <id>P15151</id>
        <label>PVR</label>
    </interactant>
    <organismsDiffer>false</organismsDiffer>
    <experiments>3</experiments>
</comment>
<comment type="interaction">
    <interactant intactId="EBI-10827839">
        <id>Q15848</id>
    </interactant>
    <interactant intactId="EBI-17247926">
        <id>Q9NY72</id>
        <label>SCN3B</label>
    </interactant>
    <organismsDiffer>false</organismsDiffer>
    <experiments>3</experiments>
</comment>
<comment type="interaction">
    <interactant intactId="EBI-10827839">
        <id>Q15848</id>
    </interactant>
    <interactant intactId="EBI-347996">
        <id>O43765</id>
        <label>SGTA</label>
    </interactant>
    <organismsDiffer>false</organismsDiffer>
    <experiments>7</experiments>
</comment>
<comment type="interaction">
    <interactant intactId="EBI-10827839">
        <id>Q15848</id>
    </interactant>
    <interactant intactId="EBI-744081">
        <id>Q96EQ0</id>
        <label>SGTB</label>
    </interactant>
    <organismsDiffer>false</organismsDiffer>
    <experiments>3</experiments>
</comment>
<comment type="interaction">
    <interactant intactId="EBI-10827839">
        <id>Q15848</id>
    </interactant>
    <interactant intactId="EBI-17640454">
        <id>Q96PQ1</id>
        <label>SIGLEC12</label>
    </interactant>
    <organismsDiffer>false</organismsDiffer>
    <experiments>3</experiments>
</comment>
<comment type="interaction">
    <interactant intactId="EBI-10827839">
        <id>Q15848</id>
    </interactant>
    <interactant intactId="EBI-12081840">
        <id>A1A5C7-2</id>
        <label>SLC22A23</label>
    </interactant>
    <organismsDiffer>false</organismsDiffer>
    <experiments>3</experiments>
</comment>
<comment type="interaction">
    <interactant intactId="EBI-10827839">
        <id>Q15848</id>
    </interactant>
    <interactant intactId="EBI-17295964">
        <id>Q9NQQ7-3</id>
        <label>SLC35C2</label>
    </interactant>
    <organismsDiffer>false</organismsDiffer>
    <experiments>3</experiments>
</comment>
<comment type="interaction">
    <interactant intactId="EBI-10827839">
        <id>Q15848</id>
    </interactant>
    <interactant intactId="EBI-13389236">
        <id>Q7Z769</id>
        <label>SLC35E3</label>
    </interactant>
    <organismsDiffer>false</organismsDiffer>
    <experiments>3</experiments>
</comment>
<comment type="interaction">
    <interactant intactId="EBI-10827839">
        <id>Q15848</id>
    </interactant>
    <interactant intactId="EBI-10770179">
        <id>Q96A49</id>
        <label>SYAP1</label>
    </interactant>
    <organismsDiffer>false</organismsDiffer>
    <experiments>3</experiments>
</comment>
<comment type="interaction">
    <interactant intactId="EBI-10827839">
        <id>Q15848</id>
    </interactant>
    <interactant intactId="EBI-12099160">
        <id>Q8N205-2</id>
        <label>SYNE4</label>
    </interactant>
    <organismsDiffer>false</organismsDiffer>
    <experiments>6</experiments>
</comment>
<comment type="interaction">
    <interactant intactId="EBI-10827839">
        <id>Q15848</id>
    </interactant>
    <interactant intactId="EBI-11724423">
        <id>Q7Z7N9</id>
        <label>TMEM179B</label>
    </interactant>
    <organismsDiffer>false</organismsDiffer>
    <experiments>3</experiments>
</comment>
<comment type="interaction">
    <interactant intactId="EBI-10827839">
        <id>Q15848</id>
    </interactant>
    <interactant intactId="EBI-10982110">
        <id>Q96Q45-2</id>
        <label>TMEM237</label>
    </interactant>
    <organismsDiffer>false</organismsDiffer>
    <experiments>3</experiments>
</comment>
<comment type="interaction">
    <interactant intactId="EBI-10827839">
        <id>Q15848</id>
    </interactant>
    <interactant intactId="EBI-11722971">
        <id>Q53FP2</id>
        <label>TMEM35A</label>
    </interactant>
    <organismsDiffer>false</organismsDiffer>
    <experiments>3</experiments>
</comment>
<comment type="interaction">
    <interactant intactId="EBI-10827839">
        <id>Q15848</id>
    </interactant>
    <interactant intactId="EBI-12345267">
        <id>O15393-2</id>
        <label>TMPRSS2</label>
    </interactant>
    <organismsDiffer>false</organismsDiffer>
    <experiments>3</experiments>
</comment>
<comment type="interaction">
    <interactant intactId="EBI-10827839">
        <id>Q15848</id>
    </interactant>
    <interactant intactId="EBI-524131">
        <id>O43557</id>
        <label>TNFSF14</label>
    </interactant>
    <organismsDiffer>false</organismsDiffer>
    <experiments>3</experiments>
</comment>
<comment type="interaction">
    <interactant intactId="EBI-10827839">
        <id>Q15848</id>
    </interactant>
    <interactant intactId="EBI-17716262">
        <id>Q9UPQ4-2</id>
        <label>TRIM35</label>
    </interactant>
    <organismsDiffer>false</organismsDiffer>
    <experiments>3</experiments>
</comment>
<comment type="subcellular location">
    <subcellularLocation>
        <location evidence="15">Secreted</location>
    </subcellularLocation>
</comment>
<comment type="tissue specificity">
    <text evidence="15">Synthesized exclusively by adipocytes and secreted into plasma.</text>
</comment>
<comment type="domain">
    <text>The C1q domain is commonly called the globular domain.</text>
</comment>
<comment type="PTM">
    <text evidence="3">HMW complexes are more extensively glycosylated than smaller oligomers. Hydroxylation and glycosylation of the lysine residues within the collagen-like domain of adiponectin seem to be critically involved in regulating the formation and/or secretion of HMW complexes and consequently contribute to the insulin-sensitizing activity of adiponectin in hepatocytes.</text>
</comment>
<comment type="PTM">
    <text evidence="13 14">O-glycosylated. Not N-glycosylated. O-linked glycans on hydroxylysines consist of Glc-Gal disaccharides bound to the oxygen atom of post-translationally added hydroxyl groups. Sialylated to varying degrees depending on tissue. Thr-22 appears to be the major site of sialylation. Higher sialylation found in SGBS adipocytes than in HEK fibroblasts. Sialylation is not required neither for heterodimerization nor for secretion. Not sialylated on the glycosylated hydroxylysines. Desialylated forms are rapidly cleared from the circulation.</text>
</comment>
<comment type="PTM">
    <text evidence="3">Succination of Cys-36 by the Krebs cycle intermediate fumarate, which leads to S-(2-succinyl)cysteine residues, inhibits polymerization and secretion of adiponectin. Adiponectin is a major target for succination in both adipocytes and adipose tissue of diabetic mammals. It was proposed that succination of proteins is a biomarker of mitochondrial stress and accumulation of Krebs cycle intermediates in adipose tissue in diabetes and that succination of adiponectin may contribute to the decrease in plasma adiponectin in diabetes.</text>
</comment>
<comment type="polymorphism">
    <text evidence="6 9">Genetic variations in ADIPOQ influence the variance in adiponectin serum levels and define the adiponectin serum levels quantitative trait locus 1 (ADIPQTL1) [MIM:612556].</text>
</comment>
<comment type="disease" evidence="6 8 9">
    <disease id="DI-00041">
        <name>Adiponectin deficiency</name>
        <acronym>ADPOD</acronym>
        <description>An autosomal dominant condition characterized by very low concentrations of plasma adiponectin. Levels of adiponectin are decreased in obesity and may contribute to a chronic state of inflammation that leads to insulin resistance, type 2 diabetes, coronary artery disease, myocardial infarction, non-alcoholic steatohepatitis, and kidney disease.</description>
        <dbReference type="MIM" id="612556"/>
    </disease>
    <text>The disease is caused by variants affecting the gene represented in this entry.</text>
</comment>
<comment type="pharmaceutical">
    <text>Adiponectin might be used in the treatment of diabetes type 2 and insulin resistance.</text>
</comment>
<comment type="miscellaneous">
    <text>Variants Arg-84 and Ser-90 show impaired formation of HMW complexes whereas variants Cys-112 and Thr-164 show impaired secretion of adiponectin in any form.</text>
</comment>
<comment type="miscellaneous">
    <text evidence="1">HMW-complex blood contents are higher in females than in males, are increased in males by castration and decreased again upon subsequent testosterone treatment, which blocks HMW-complex secretion (By similarity). In type 2 diabetic patients, both the ratios of HMW to total adiponectin and the degree of adiponectin glycosylation are significantly decreased as compared with healthy controls.</text>
</comment>
<comment type="caution">
    <text evidence="13">The expected hydroxylation of Lys-33 was not identified, probably due to poor representation of the N-terminal peptide in mass fingerprinting.</text>
</comment>
<comment type="online information" name="Wikipedia">
    <link uri="https://en.wikipedia.org/wiki/Adiponectin"/>
    <text>Adiponectin entry</text>
</comment>
<reference key="1">
    <citation type="journal article" date="1996" name="Biochem. Biophys. Res. Commun.">
        <title>cDNA cloning and expression of a novel adipose specific collagen-like factor, apM1 (AdiPose Most abundant Gene transcript 1).</title>
        <authorList>
            <person name="Maeda K."/>
            <person name="Okubo K."/>
            <person name="Shimomura I."/>
            <person name="Funahashi T."/>
            <person name="Matsuzawa Y."/>
            <person name="Matsubara K."/>
        </authorList>
    </citation>
    <scope>NUCLEOTIDE SEQUENCE [MRNA]</scope>
    <source>
        <tissue>Adipose tissue</tissue>
    </source>
</reference>
<reference key="2">
    <citation type="journal article" date="1999" name="Gene">
        <title>Organization of the gene for gelatin-binding protein (GBP28).</title>
        <authorList>
            <person name="Saito K."/>
            <person name="Tobe T."/>
            <person name="Minoshima S."/>
            <person name="Asakawa S."/>
            <person name="Sumiya J."/>
            <person name="Yoda M."/>
            <person name="Nakano Y."/>
            <person name="Shimizu N."/>
            <person name="Tomita M."/>
        </authorList>
    </citation>
    <scope>NUCLEOTIDE SEQUENCE [GENOMIC DNA]</scope>
</reference>
<reference key="3">
    <citation type="journal article" date="1999" name="Biochem. Biophys. Res. Commun.">
        <title>The human apM-1, an adipocyte-specific gene linked to the family of TNF's and to genes expressed in activated T cells, is mapped to chromosome 1q21.3-q23, a susceptibility locus identified for familial combined hyperlipidemia (FCH).</title>
        <authorList>
            <person name="Schaeffler A."/>
            <person name="Orso E."/>
            <person name="Palitzsch K.D."/>
            <person name="Buechler C."/>
            <person name="Drobnik W."/>
            <person name="Fuerst A."/>
            <person name="Schoelmerich J."/>
            <person name="Schmitz G."/>
        </authorList>
    </citation>
    <scope>NUCLEOTIDE SEQUENCE [GENOMIC DNA]</scope>
</reference>
<reference key="4">
    <citation type="journal article" date="2004" name="Genome Res.">
        <title>The status, quality, and expansion of the NIH full-length cDNA project: the Mammalian Gene Collection (MGC).</title>
        <authorList>
            <consortium name="The MGC Project Team"/>
        </authorList>
    </citation>
    <scope>NUCLEOTIDE SEQUENCE [LARGE SCALE MRNA]</scope>
</reference>
<reference key="5">
    <citation type="journal article" date="2004" name="Protein Sci.">
        <title>Signal peptide prediction based on analysis of experimentally verified cleavage sites.</title>
        <authorList>
            <person name="Zhang Z."/>
            <person name="Henzel W.J."/>
        </authorList>
    </citation>
    <scope>PROTEIN SEQUENCE OF 19-33</scope>
</reference>
<reference key="6">
    <citation type="journal article" date="1996" name="J. Biochem.">
        <title>Isolation and characterization of GBP28, a novel gelatin-binding protein purified from human plasma.</title>
        <authorList>
            <person name="Nakano Y."/>
            <person name="Tobe T."/>
            <person name="Choi-Miura N.H."/>
            <person name="Mazda T."/>
            <person name="Tomita M."/>
        </authorList>
    </citation>
    <scope>PROTEIN SEQUENCE OF N-TERMINUS</scope>
    <scope>PARTIAL PROTEIN SEQUENCE</scope>
    <scope>SUBCELLULAR LOCATION</scope>
    <scope>TISSUE SPECIFICITY</scope>
</reference>
<reference key="7">
    <citation type="journal article" date="2000" name="Blood">
        <title>Adiponectin, a new member of the family of soluble defense collagens, negatively regulates the growth of myelomonocytic progenitors and the functions of macrophages.</title>
        <authorList>
            <person name="Yokota T."/>
            <person name="Oritani K."/>
            <person name="Takahashi I."/>
            <person name="Ishikawa J."/>
            <person name="Matsuyama A."/>
            <person name="Ouchi N."/>
            <person name="Kihara S."/>
            <person name="Funahashi T."/>
            <person name="Tenner A.J."/>
            <person name="Tomiyama Y."/>
            <person name="Matsuzawa Y."/>
        </authorList>
    </citation>
    <scope>CHARACTERIZATION</scope>
</reference>
<reference key="8">
    <citation type="journal article" date="2000" name="Circulation">
        <title>Adiponectin, an adipocyte-derived plasma protein, inhibits endothelial NF-kappaB signaling through a cAMP-dependent pathway.</title>
        <authorList>
            <person name="Ouchi N."/>
            <person name="Kihara S."/>
            <person name="Arita Y."/>
            <person name="Okamoto Y."/>
            <person name="Maeda K."/>
            <person name="Kuriyama H."/>
            <person name="Hotta K."/>
            <person name="Nishida M."/>
            <person name="Takahashi M."/>
            <person name="Muraguchi M."/>
            <person name="Ohmoto Y."/>
            <person name="Nakamura T."/>
            <person name="Yamashita S."/>
            <person name="Funahashi T."/>
            <person name="Matsuzawa Y."/>
        </authorList>
    </citation>
    <scope>CHARACTERIZATION</scope>
</reference>
<reference key="9">
    <citation type="journal article" date="2001" name="Nat. Med.">
        <title>The fat-derived hormone adiponectin reverses insulin resistance associated with both lipoatrophy and obesity.</title>
        <authorList>
            <person name="Yamauchi T."/>
            <person name="Kamon J."/>
            <person name="Waki H."/>
            <person name="Terauchi Y."/>
            <person name="Kubota N."/>
            <person name="Hara K."/>
            <person name="Mori Y."/>
            <person name="Ide T."/>
            <person name="Murakami K."/>
            <person name="Tsuboyama-Kasaoka N."/>
            <person name="Ezaki O."/>
            <person name="Akanuma Y."/>
            <person name="Gavrilova O."/>
            <person name="Vinson C."/>
            <person name="Reitman M.L."/>
            <person name="Kagechika H."/>
            <person name="Shudo K."/>
            <person name="Yoda M."/>
            <person name="Nakano Y."/>
            <person name="Tobe K."/>
            <person name="Nagai R."/>
            <person name="Kimura S."/>
            <person name="Tomita M."/>
            <person name="Froguel P."/>
            <person name="Kadowaki T."/>
        </authorList>
    </citation>
    <scope>FUNCTION</scope>
</reference>
<reference key="10">
    <citation type="journal article" date="2003" name="J. Biol. Chem.">
        <title>Impaired multimerization of human adiponectin mutants associated with diabetes. Molecular structure and multimer formation of adiponectin.</title>
        <authorList>
            <person name="Waki H."/>
            <person name="Yamauchi T."/>
            <person name="Kamon J."/>
            <person name="Ito Y."/>
            <person name="Uchida S."/>
            <person name="Kita S."/>
            <person name="Hara K."/>
            <person name="Hada Y."/>
            <person name="Vasseur F."/>
            <person name="Froguel P."/>
            <person name="Kimura S."/>
            <person name="Nagai R."/>
            <person name="Kadowaki T."/>
        </authorList>
    </citation>
    <scope>SUBUNIT</scope>
    <scope>DISULFIDE BOND</scope>
    <scope>MUTAGENESIS OF CYS-36</scope>
    <scope>CHARACTERIZATION OF VARIANTS ARG-84; SER-90; CYS-112 AND THR-164</scope>
</reference>
<reference key="11">
    <citation type="journal article" date="2006" name="Mol. Endocrinol.">
        <title>Adiponectin multimerization is dependent on conserved lysines in the collagenous domain: evidence for regulation of multimerization by alterations in posttranslational modifications.</title>
        <authorList>
            <person name="Richards A.A."/>
            <person name="Stephens T."/>
            <person name="Charlton H.K."/>
            <person name="Jones A."/>
            <person name="Macdonald G.A."/>
            <person name="Prins J.B."/>
            <person name="Whitehead J.P."/>
        </authorList>
    </citation>
    <scope>SUBUNIT</scope>
    <scope>HYDROXYLATION AT PRO-44; PRO-47; PRO-53; LYS-65; LYS-68; PRO-71; PRO-76; LYS-77; PRO-91; PRO-95 AND LYS-101</scope>
    <scope>GLYCOSYLATION AT LYS-65; LYS-68; LYS-77 AND LYS-101</scope>
    <scope>DISULFIDE BOND</scope>
    <scope>LACK OF HYDROXYLATION AT PRO-62; PRO-86 AND PRO-104</scope>
    <scope>LACK OF GLYCOSYLATION AT ASN-230</scope>
    <scope>MUTAGENESIS OF LYS-33; CYS-36; LYS-65; LYS-68; LYS-77 AND LYS-101</scope>
    <scope>IDENTIFICATION BY MASS SPECTROMETRY</scope>
</reference>
<reference key="12">
    <citation type="journal article" date="2010" name="Mol. Endocrinol.">
        <title>Sialic acid modification of adiponectin is not required for multimerization or secretion but determines half-life in circulation.</title>
        <authorList>
            <person name="Richards A.A."/>
            <person name="Colgrave M.L."/>
            <person name="Zhang J."/>
            <person name="Webster J."/>
            <person name="Simpson F."/>
            <person name="Preston E."/>
            <person name="Wilks D."/>
            <person name="Hoehn K.L."/>
            <person name="Stephenson M."/>
            <person name="Macdonald G.A."/>
            <person name="Prins J.B."/>
            <person name="Cooney G.J."/>
            <person name="Xu A."/>
            <person name="Whitehead J.P."/>
        </authorList>
    </citation>
    <scope>GLYCOSYLATION AT THR-21 AND THR-22</scope>
    <scope>SUBUNIT</scope>
    <scope>IDENTIFICATION BY MASS SPECTROMETRY</scope>
    <scope>MUTAGENESIS OF THR-20; THR-21 AND THR-22</scope>
</reference>
<reference key="13">
    <citation type="journal article" date="2012" name="J. Proteome Res.">
        <title>Resveratrol-induced changes of the human adipocyte secretion profile.</title>
        <authorList>
            <person name="Rosenow A."/>
            <person name="Noben J.P."/>
            <person name="Jocken J."/>
            <person name="Kallendrusch S."/>
            <person name="Fischer-Posovszky P."/>
            <person name="Mariman E.C."/>
            <person name="Renes J."/>
        </authorList>
    </citation>
    <scope>IDENTIFICATION BY MASS SPECTROMETRY [LARGE SCALE ANALYSIS]</scope>
</reference>
<reference key="14">
    <citation type="journal article" date="2012" name="FEBS Lett.">
        <title>Crystal structure of a single-chain trimer of human adiponectin globular domain.</title>
        <authorList>
            <person name="Min X."/>
            <person name="Lemon B."/>
            <person name="Tang J."/>
            <person name="Liu Q."/>
            <person name="Zhang R."/>
            <person name="Walker N."/>
            <person name="Li Y."/>
            <person name="Wang Z."/>
        </authorList>
    </citation>
    <scope>X-RAY CRYSTALLOGRAPHY (2.0 ANGSTROMS) OF 104-244</scope>
    <scope>SUBUNIT</scope>
</reference>
<reference key="15">
    <citation type="journal article" date="2000" name="Int. J. Obes. Relat. Metab. Disord.">
        <title>Genomic structure and mutations in adipose-specific gene, adiponectin.</title>
        <authorList>
            <person name="Takahashi M."/>
            <person name="Arita Y."/>
            <person name="Yamagata K."/>
            <person name="Matsukawa Y."/>
            <person name="Okutomi K."/>
            <person name="Horie M."/>
            <person name="Shimomura I."/>
            <person name="Hotta K."/>
            <person name="Kuriyama H."/>
            <person name="Kihara S."/>
            <person name="Nakamura T."/>
            <person name="Yamashita S."/>
            <person name="Funahashi T."/>
            <person name="Matsuzawa Y."/>
        </authorList>
    </citation>
    <scope>VARIANT ADPOD CYS-112</scope>
    <scope>POLYMORPHISM</scope>
</reference>
<reference key="16">
    <citation type="journal article" date="2002" name="Diabetes">
        <title>Genetic variation in the gene encoding adiponectin is associated with an increased risk of type 2 diabetes in the Japanese population.</title>
        <authorList>
            <person name="Hara K."/>
            <person name="Boutin P."/>
            <person name="Mori Y."/>
            <person name="Tobe K."/>
            <person name="Dina C."/>
            <person name="Yasuda K."/>
            <person name="Yamauchi T."/>
            <person name="Otabe S."/>
            <person name="Okada T."/>
            <person name="Eto K."/>
            <person name="Kadowaki H."/>
            <person name="Hagura R."/>
            <person name="Akanuma Y."/>
            <person name="Yazaki Y."/>
            <person name="Nagai R."/>
            <person name="Taniyama M."/>
            <person name="Matsubara K."/>
            <person name="Yoda M."/>
            <person name="Nakano Y."/>
            <person name="Kimura S."/>
            <person name="Tomita M."/>
            <person name="Kimura S."/>
            <person name="Ito C."/>
            <person name="Froguel P."/>
            <person name="Kadowaki T."/>
        </authorList>
    </citation>
    <scope>VARIANTS ARG-84; MET-117; THR-164; SER-221 AND PRO-241</scope>
    <scope>INVOLVEMENT IN ADPOD</scope>
</reference>
<reference key="17">
    <citation type="journal article" date="2002" name="Diabetes">
        <authorList>
            <person name="Hara K."/>
            <person name="Boutin P."/>
            <person name="Mori Y."/>
            <person name="Tobe K."/>
            <person name="Dina C."/>
            <person name="Yasuda K."/>
            <person name="Yamauchi T."/>
            <person name="Otabe S."/>
            <person name="Okada T."/>
            <person name="Eto K."/>
            <person name="Kadowaki H."/>
            <person name="Hagura R."/>
            <person name="Akanuma Y."/>
            <person name="Yazaki Y."/>
            <person name="Nagai R."/>
            <person name="Taniyama M."/>
            <person name="Matsubara K."/>
            <person name="Yoda M."/>
            <person name="Nakano Y."/>
            <person name="Kimura S."/>
            <person name="Tomita M."/>
            <person name="Kimura S."/>
            <person name="Ito C."/>
            <person name="Froguel P."/>
            <person name="Kadowaki T."/>
        </authorList>
    </citation>
    <scope>ERRATUM OF PUBMED:11812766</scope>
</reference>
<reference key="18">
    <citation type="journal article" date="2002" name="Diabetes">
        <title>Association of adiponectin mutation with type 2 diabetes: a candidate gene for the insulin resistance syndrome.</title>
        <authorList>
            <person name="Kondo H."/>
            <person name="Shimomura I."/>
            <person name="Matsukawa Y."/>
            <person name="Kumada M."/>
            <person name="Takahashi M."/>
            <person name="Matsuda M."/>
            <person name="Ouchi N."/>
            <person name="Kihara S."/>
            <person name="Kawamoto T."/>
            <person name="Sumitsuji S."/>
            <person name="Funahashi T."/>
            <person name="Matsuzawa Y."/>
        </authorList>
    </citation>
    <scope>VARIANTS SER-221 AND PRO-241</scope>
    <scope>POLYMORPHISM</scope>
    <scope>VARIANTS ADPOD CYS-112 AND THR-164</scope>
</reference>
<reference key="19">
    <citation type="journal article" date="2002" name="Hum. Mol. Genet.">
        <title>Single-nucleotide polymorphism haplotypes in the both proximal promoter and exon 3 of the APM1 gene modulate adipocyte-secreted adiponectin hormone levels and contribute to the genetic risk for type 2 diabetes in French Caucasians.</title>
        <authorList>
            <person name="Vasseur F."/>
            <person name="Helbecque N."/>
            <person name="Dina C."/>
            <person name="Lobbens S."/>
            <person name="Delannoy V."/>
            <person name="Gaget S."/>
            <person name="Boutin P."/>
            <person name="Vaxillaire M."/>
            <person name="Lepretre F."/>
            <person name="Dupont S."/>
            <person name="Hara K."/>
            <person name="Clement K."/>
            <person name="Bihain B."/>
            <person name="Kadowaki T."/>
            <person name="Froguel P."/>
        </authorList>
    </citation>
    <scope>VARIANTS ARG-84; SER-90 AND HIS-111</scope>
</reference>
<reference key="20">
    <citation type="journal article" date="2022" name="NPJ Genom. Med.">
        <title>A dominant negative ADIPOQ mutation in a diabetic family with renal disease, hypoadiponectinemia, and hyperceramidemia.</title>
        <authorList>
            <person name="Simeone C.A."/>
            <person name="Wilkerson J.L."/>
            <person name="Poss A.M."/>
            <person name="Banks J.A."/>
            <person name="Varre J.V."/>
            <person name="Guevara J.L."/>
            <person name="Hernandez E.J."/>
            <person name="Gorsi B."/>
            <person name="Atkinson D.L."/>
            <person name="Turapov T."/>
            <person name="Frodsham S.G."/>
            <person name="Morales J.C.F."/>
            <person name="O'Neil K."/>
            <person name="Moore B."/>
            <person name="Yandell M."/>
            <person name="Summers S.A."/>
            <person name="Krolewski A.S."/>
            <person name="Holland W.L."/>
            <person name="Pezzolesi M.G."/>
        </authorList>
    </citation>
    <scope>INVOLVEMENT IN ADPOD</scope>
</reference>
<evidence type="ECO:0000250" key="1"/>
<evidence type="ECO:0000250" key="2">
    <source>
        <dbReference type="UniProtKB" id="Q3Y5Z3"/>
    </source>
</evidence>
<evidence type="ECO:0000250" key="3">
    <source>
        <dbReference type="UniProtKB" id="Q60994"/>
    </source>
</evidence>
<evidence type="ECO:0000255" key="4">
    <source>
        <dbReference type="PROSITE-ProRule" id="PRU00368"/>
    </source>
</evidence>
<evidence type="ECO:0000256" key="5">
    <source>
        <dbReference type="SAM" id="MobiDB-lite"/>
    </source>
</evidence>
<evidence type="ECO:0000269" key="6">
    <source>
    </source>
</evidence>
<evidence type="ECO:0000269" key="7">
    <source>
    </source>
</evidence>
<evidence type="ECO:0000269" key="8">
    <source>
    </source>
</evidence>
<evidence type="ECO:0000269" key="9">
    <source>
    </source>
</evidence>
<evidence type="ECO:0000269" key="10">
    <source>
    </source>
</evidence>
<evidence type="ECO:0000269" key="11">
    <source>
    </source>
</evidence>
<evidence type="ECO:0000269" key="12">
    <source>
    </source>
</evidence>
<evidence type="ECO:0000269" key="13">
    <source>
    </source>
</evidence>
<evidence type="ECO:0000269" key="14">
    <source>
    </source>
</evidence>
<evidence type="ECO:0000269" key="15">
    <source>
    </source>
</evidence>
<evidence type="ECO:0000303" key="16">
    <source>
    </source>
</evidence>
<evidence type="ECO:0000303" key="17">
    <source>
    </source>
</evidence>
<evidence type="ECO:0000303" key="18">
    <source>
    </source>
</evidence>
<evidence type="ECO:0000303" key="19">
    <source>
    </source>
</evidence>
<evidence type="ECO:0007829" key="20">
    <source>
        <dbReference type="PDB" id="6U66"/>
    </source>
</evidence>
<evidence type="ECO:0007829" key="21">
    <source>
        <dbReference type="PDB" id="6U6N"/>
    </source>
</evidence>
<sequence>MLLLGAVLLLLALPGHDQETTTQGPGVLLPLPKGACTGWMAGIPGHPGHNGAPGRDGRDGTPGEKGEKGDPGLIGPKGDIGETGVPGAEGPRGFPGIQGRKGEPGEGAYVYRSAFSVGLETYVTIPNMPIRFTKIFYNQQNHYDGSTGKFHCNIPGLYYFAYHITVYMKDVKVSLFKKDKAMLFTYDQYQENNVDQASGSVLLHLEVGDQVWLQVYGEGERNGLYADNDNDSTFTGFLLYHDTN</sequence>
<feature type="signal peptide" evidence="12 15">
    <location>
        <begin position="1"/>
        <end position="18"/>
    </location>
</feature>
<feature type="chain" id="PRO_0000003543" description="Adiponectin">
    <location>
        <begin position="19"/>
        <end position="244"/>
    </location>
</feature>
<feature type="domain" description="Collagen-like">
    <location>
        <begin position="42"/>
        <end position="107"/>
    </location>
</feature>
<feature type="domain" description="C1q" evidence="4">
    <location>
        <begin position="108"/>
        <end position="244"/>
    </location>
</feature>
<feature type="region of interest" description="Disordered" evidence="5">
    <location>
        <begin position="40"/>
        <end position="101"/>
    </location>
</feature>
<feature type="compositionally biased region" description="Basic and acidic residues" evidence="5">
    <location>
        <begin position="55"/>
        <end position="70"/>
    </location>
</feature>
<feature type="site" description="Not hydroxylated" evidence="13">
    <location>
        <position position="62"/>
    </location>
</feature>
<feature type="site" description="Not hydroxylated" evidence="13">
    <location>
        <position position="86"/>
    </location>
</feature>
<feature type="site" description="Not hydroxylated" evidence="13">
    <location>
        <position position="104"/>
    </location>
</feature>
<feature type="site" description="Not glycosylated" evidence="13">
    <location>
        <position position="230"/>
    </location>
</feature>
<feature type="modified residue" description="5-hydroxylysine" evidence="2">
    <location>
        <position position="33"/>
    </location>
</feature>
<feature type="modified residue" description="S-(2-succinyl)cysteine" evidence="3">
    <location>
        <position position="36"/>
    </location>
</feature>
<feature type="modified residue" description="4-hydroxyproline" evidence="13">
    <location>
        <position position="44"/>
    </location>
</feature>
<feature type="modified residue" description="4-hydroxyproline" evidence="13">
    <location>
        <position position="47"/>
    </location>
</feature>
<feature type="modified residue" description="4-hydroxyproline" evidence="13">
    <location>
        <position position="53"/>
    </location>
</feature>
<feature type="modified residue" description="5-hydroxylysine" evidence="13">
    <location>
        <position position="65"/>
    </location>
</feature>
<feature type="modified residue" description="5-hydroxylysine" evidence="13">
    <location>
        <position position="68"/>
    </location>
</feature>
<feature type="modified residue" description="4-hydroxyproline; partial" evidence="13">
    <location>
        <position position="71"/>
    </location>
</feature>
<feature type="modified residue" description="4-hydroxyproline; partial" evidence="13">
    <location>
        <position position="76"/>
    </location>
</feature>
<feature type="modified residue" description="5-hydroxylysine" evidence="13">
    <location>
        <position position="77"/>
    </location>
</feature>
<feature type="modified residue" description="4-hydroxyproline" evidence="13">
    <location>
        <position position="91"/>
    </location>
</feature>
<feature type="modified residue" description="4-hydroxyproline; partial" evidence="13">
    <location>
        <position position="95"/>
    </location>
</feature>
<feature type="modified residue" description="5-hydroxylysine" evidence="13">
    <location>
        <position position="101"/>
    </location>
</feature>
<feature type="glycosylation site" description="O-linked (GalNAc...) threonine" evidence="14">
    <location>
        <position position="21"/>
    </location>
</feature>
<feature type="glycosylation site" description="O-linked (GalNAc...) threonine" evidence="14">
    <location>
        <position position="22"/>
    </location>
</feature>
<feature type="glycosylation site" description="O-linked (Gal...) hydroxylysine; partial" evidence="13">
    <location>
        <position position="65"/>
    </location>
</feature>
<feature type="glycosylation site" description="O-linked (Gal...) hydroxylysine; partial" evidence="13">
    <location>
        <position position="68"/>
    </location>
</feature>
<feature type="glycosylation site" description="O-linked (Gal...) hydroxylysine; partial" evidence="13">
    <location>
        <position position="77"/>
    </location>
</feature>
<feature type="glycosylation site" description="O-linked (Gal...) hydroxylysine; partial" evidence="13">
    <location>
        <position position="101"/>
    </location>
</feature>
<feature type="disulfide bond" description="Interchain; in form MMW and form HMW" evidence="11 13">
    <location>
        <position position="36"/>
    </location>
</feature>
<feature type="sequence variant" id="VAR_013273" description="Does not form high molecular weight multimers; dbSNP:rs199646033." evidence="8 10 11">
    <original>G</original>
    <variation>R</variation>
    <location>
        <position position="84"/>
    </location>
</feature>
<feature type="sequence variant" id="VAR_027395" description="Does not form high molecular weight multimers; dbSNP:rs62625753." evidence="10 11">
    <original>G</original>
    <variation>S</variation>
    <location>
        <position position="90"/>
    </location>
</feature>
<feature type="sequence variant" id="VAR_027396" description="In dbSNP:rs17366743." evidence="10">
    <original>Y</original>
    <variation>H</variation>
    <location>
        <position position="111"/>
    </location>
</feature>
<feature type="sequence variant" id="VAR_013274" description="In ADPOD; does not assemble into trimers resulting in impaired secretion from the cell; dbSNP:rs121917815." evidence="6 9 11">
    <original>R</original>
    <variation>C</variation>
    <location>
        <position position="112"/>
    </location>
</feature>
<feature type="sequence variant" id="VAR_013275" description="In dbSNP:rs747223144." evidence="8">
    <original>V</original>
    <variation>M</variation>
    <location>
        <position position="117"/>
    </location>
</feature>
<feature type="sequence variant" id="VAR_013276" description="In ADPOD; does not assemble into trimers resulting in impaired secretion from the cell; dbSNP:rs185847354." evidence="8 9 11">
    <original>I</original>
    <variation>T</variation>
    <location>
        <position position="164"/>
    </location>
</feature>
<feature type="sequence variant" id="VAR_013277" description="In dbSNP:rs138773406." evidence="8 9">
    <original>R</original>
    <variation>S</variation>
    <location>
        <position position="221"/>
    </location>
</feature>
<feature type="sequence variant" id="VAR_013278" description="In dbSNP:rs141205818." evidence="8 9">
    <original>H</original>
    <variation>P</variation>
    <location>
        <position position="241"/>
    </location>
</feature>
<feature type="mutagenesis site" description="No change in sialylated isoforms." evidence="14">
    <original>T</original>
    <variation>A</variation>
    <location>
        <position position="20"/>
    </location>
</feature>
<feature type="mutagenesis site" description="Some loss of sialylated isoforms." evidence="14">
    <original>T</original>
    <variation>A</variation>
    <location>
        <position position="21"/>
    </location>
</feature>
<feature type="mutagenesis site" description="Abolishes sialylated isoforms." evidence="14">
    <original>T</original>
    <variation>A</variation>
    <location>
        <position position="22"/>
    </location>
</feature>
<feature type="mutagenesis site" description="No effect on formation of HMW multimers." evidence="13">
    <original>K</original>
    <variation>R</variation>
    <location>
        <position position="33"/>
    </location>
</feature>
<feature type="mutagenesis site" description="Impaired formation of MMW and HMW multimers." evidence="11 13">
    <original>C</original>
    <variation>S</variation>
    <location>
        <position position="36"/>
    </location>
</feature>
<feature type="mutagenesis site" description="Impaired formation of HMW multimers; when associated with R-68." evidence="13">
    <original>K</original>
    <variation>R</variation>
    <location>
        <position position="65"/>
    </location>
</feature>
<feature type="mutagenesis site" description="Impaired formation of HMW multimers; when associated with R-65." evidence="13">
    <original>K</original>
    <variation>R</variation>
    <location>
        <position position="68"/>
    </location>
</feature>
<feature type="mutagenesis site" description="Impaired formation of HMW multimers; when associated with R-101." evidence="13">
    <original>K</original>
    <variation>R</variation>
    <location>
        <position position="77"/>
    </location>
</feature>
<feature type="mutagenesis site" description="Impaired formation of HMW multimers; when associated with R-77." evidence="13">
    <original>K</original>
    <variation>R</variation>
    <location>
        <position position="101"/>
    </location>
</feature>
<feature type="strand" evidence="20">
    <location>
        <begin position="114"/>
        <end position="118"/>
    </location>
</feature>
<feature type="strand" evidence="21">
    <location>
        <begin position="126"/>
        <end position="129"/>
    </location>
</feature>
<feature type="strand" evidence="20">
    <location>
        <begin position="134"/>
        <end position="137"/>
    </location>
</feature>
<feature type="turn" evidence="20">
    <location>
        <begin position="145"/>
        <end position="147"/>
    </location>
</feature>
<feature type="strand" evidence="20">
    <location>
        <begin position="156"/>
        <end position="177"/>
    </location>
</feature>
<feature type="strand" evidence="20">
    <location>
        <begin position="180"/>
        <end position="187"/>
    </location>
</feature>
<feature type="strand" evidence="20">
    <location>
        <begin position="195"/>
        <end position="205"/>
    </location>
</feature>
<feature type="strand" evidence="20">
    <location>
        <begin position="210"/>
        <end position="216"/>
    </location>
</feature>
<feature type="strand" evidence="20">
    <location>
        <begin position="222"/>
        <end position="225"/>
    </location>
</feature>
<feature type="strand" evidence="20">
    <location>
        <begin position="233"/>
        <end position="241"/>
    </location>
</feature>
<organism>
    <name type="scientific">Homo sapiens</name>
    <name type="common">Human</name>
    <dbReference type="NCBI Taxonomy" id="9606"/>
    <lineage>
        <taxon>Eukaryota</taxon>
        <taxon>Metazoa</taxon>
        <taxon>Chordata</taxon>
        <taxon>Craniata</taxon>
        <taxon>Vertebrata</taxon>
        <taxon>Euteleostomi</taxon>
        <taxon>Mammalia</taxon>
        <taxon>Eutheria</taxon>
        <taxon>Euarchontoglires</taxon>
        <taxon>Primates</taxon>
        <taxon>Haplorrhini</taxon>
        <taxon>Catarrhini</taxon>
        <taxon>Hominidae</taxon>
        <taxon>Homo</taxon>
    </lineage>
</organism>
<protein>
    <recommendedName>
        <fullName>Adiponectin</fullName>
    </recommendedName>
    <alternativeName>
        <fullName>30 kDa adipocyte complement-related protein</fullName>
    </alternativeName>
    <alternativeName>
        <fullName>Adipocyte complement-related 30 kDa protein</fullName>
        <shortName>ACRP30</shortName>
    </alternativeName>
    <alternativeName>
        <fullName>Adipocyte, C1q and collagen domain-containing protein</fullName>
    </alternativeName>
    <alternativeName>
        <fullName evidence="18">Adipose most abundant gene transcript 1 protein</fullName>
        <shortName evidence="17">apM-1</shortName>
    </alternativeName>
    <alternativeName>
        <fullName>Gelatin-binding protein</fullName>
    </alternativeName>
</protein>
<name>ADIPO_HUMAN</name>